<reference key="1">
    <citation type="journal article" date="2004" name="Nucleic Acids Res.">
        <title>Genome sequence of Symbiobacterium thermophilum, an uncultivable bacterium that depends on microbial commensalism.</title>
        <authorList>
            <person name="Ueda K."/>
            <person name="Yamashita A."/>
            <person name="Ishikawa J."/>
            <person name="Shimada M."/>
            <person name="Watsuji T."/>
            <person name="Morimura K."/>
            <person name="Ikeda H."/>
            <person name="Hattori M."/>
            <person name="Beppu T."/>
        </authorList>
    </citation>
    <scope>NUCLEOTIDE SEQUENCE [LARGE SCALE GENOMIC DNA]</scope>
    <source>
        <strain>DSM 24528 / JCM 14929 / IAM 14863 / T</strain>
    </source>
</reference>
<sequence length="368" mass="39411">MAQPTYHIACLPGDGIGPEVTRGAVTVLQAAAAAYGFRLEFSEYLVGGAAYDAVGTPFPDETRDACDRADAILFGAVGGPRYEGLPWDLRPEAGLLAIRKRYDLYANLRPILLYPPLKDASPLKNEIIGGGVDFIIVRELVGGIYFGEPRGIETLPDGTRRGVNTEVYTDAEIARIARMGFEIARGRRRRLTSVDKGNVMEAGKLWRTVVDEVAREFPDVEVEHLLADNAAMQILRRPGDFDVMLASNLFGDFLSDEAAMLTGSIGLLPSASLGAARNRFGLPKGFYEPIHGSAPDIAGQDRANPLAAILCGAMLLRHSLGREDAARAVEQAVAAVLEEGLRTADITVPGTAVLGTAAMARAVADRVH</sequence>
<organism>
    <name type="scientific">Symbiobacterium thermophilum (strain DSM 24528 / JCM 14929 / IAM 14863 / T)</name>
    <dbReference type="NCBI Taxonomy" id="292459"/>
    <lineage>
        <taxon>Bacteria</taxon>
        <taxon>Bacillati</taxon>
        <taxon>Bacillota</taxon>
        <taxon>Clostridia</taxon>
        <taxon>Eubacteriales</taxon>
        <taxon>Symbiobacteriaceae</taxon>
        <taxon>Symbiobacterium</taxon>
    </lineage>
</organism>
<dbReference type="EC" id="1.1.1.85" evidence="1"/>
<dbReference type="EMBL" id="AP006840">
    <property type="protein sequence ID" value="BAD42018.1"/>
    <property type="molecule type" value="Genomic_DNA"/>
</dbReference>
<dbReference type="RefSeq" id="WP_011197150.1">
    <property type="nucleotide sequence ID" value="NC_006177.1"/>
</dbReference>
<dbReference type="SMR" id="Q67JY2"/>
<dbReference type="STRING" id="292459.STH3035"/>
<dbReference type="KEGG" id="sth:STH3035"/>
<dbReference type="eggNOG" id="COG0473">
    <property type="taxonomic scope" value="Bacteria"/>
</dbReference>
<dbReference type="HOGENOM" id="CLU_031953_0_3_9"/>
<dbReference type="OrthoDB" id="9806254at2"/>
<dbReference type="UniPathway" id="UPA00048">
    <property type="reaction ID" value="UER00072"/>
</dbReference>
<dbReference type="Proteomes" id="UP000000417">
    <property type="component" value="Chromosome"/>
</dbReference>
<dbReference type="GO" id="GO:0005829">
    <property type="term" value="C:cytosol"/>
    <property type="evidence" value="ECO:0007669"/>
    <property type="project" value="TreeGrafter"/>
</dbReference>
<dbReference type="GO" id="GO:0003862">
    <property type="term" value="F:3-isopropylmalate dehydrogenase activity"/>
    <property type="evidence" value="ECO:0007669"/>
    <property type="project" value="UniProtKB-UniRule"/>
</dbReference>
<dbReference type="GO" id="GO:0046872">
    <property type="term" value="F:metal ion binding"/>
    <property type="evidence" value="ECO:0007669"/>
    <property type="project" value="UniProtKB-KW"/>
</dbReference>
<dbReference type="GO" id="GO:0009098">
    <property type="term" value="P:L-leucine biosynthetic process"/>
    <property type="evidence" value="ECO:0007669"/>
    <property type="project" value="UniProtKB-UniRule"/>
</dbReference>
<dbReference type="FunFam" id="3.40.718.10:FF:000006">
    <property type="entry name" value="3-isopropylmalate dehydrogenase"/>
    <property type="match status" value="1"/>
</dbReference>
<dbReference type="Gene3D" id="3.40.718.10">
    <property type="entry name" value="Isopropylmalate Dehydrogenase"/>
    <property type="match status" value="1"/>
</dbReference>
<dbReference type="HAMAP" id="MF_01033">
    <property type="entry name" value="LeuB_type1"/>
    <property type="match status" value="1"/>
</dbReference>
<dbReference type="InterPro" id="IPR024084">
    <property type="entry name" value="IsoPropMal-DH-like_dom"/>
</dbReference>
<dbReference type="InterPro" id="IPR004429">
    <property type="entry name" value="Isopropylmalate_DH"/>
</dbReference>
<dbReference type="NCBIfam" id="TIGR00169">
    <property type="entry name" value="leuB"/>
    <property type="match status" value="1"/>
</dbReference>
<dbReference type="PANTHER" id="PTHR42979">
    <property type="entry name" value="3-ISOPROPYLMALATE DEHYDROGENASE"/>
    <property type="match status" value="1"/>
</dbReference>
<dbReference type="PANTHER" id="PTHR42979:SF1">
    <property type="entry name" value="3-ISOPROPYLMALATE DEHYDROGENASE"/>
    <property type="match status" value="1"/>
</dbReference>
<dbReference type="Pfam" id="PF00180">
    <property type="entry name" value="Iso_dh"/>
    <property type="match status" value="1"/>
</dbReference>
<dbReference type="SMART" id="SM01329">
    <property type="entry name" value="Iso_dh"/>
    <property type="match status" value="1"/>
</dbReference>
<dbReference type="SUPFAM" id="SSF53659">
    <property type="entry name" value="Isocitrate/Isopropylmalate dehydrogenase-like"/>
    <property type="match status" value="1"/>
</dbReference>
<accession>Q67JY2</accession>
<evidence type="ECO:0000255" key="1">
    <source>
        <dbReference type="HAMAP-Rule" id="MF_01033"/>
    </source>
</evidence>
<name>LEU3_SYMTH</name>
<gene>
    <name evidence="1" type="primary">leuB</name>
    <name type="ordered locus">STH3035</name>
</gene>
<proteinExistence type="inferred from homology"/>
<feature type="chain" id="PRO_0000083765" description="3-isopropylmalate dehydrogenase">
    <location>
        <begin position="1"/>
        <end position="368"/>
    </location>
</feature>
<feature type="binding site" evidence="1">
    <location>
        <begin position="79"/>
        <end position="92"/>
    </location>
    <ligand>
        <name>NAD(+)</name>
        <dbReference type="ChEBI" id="CHEBI:57540"/>
    </ligand>
</feature>
<feature type="binding site" evidence="1">
    <location>
        <position position="99"/>
    </location>
    <ligand>
        <name>substrate</name>
    </ligand>
</feature>
<feature type="binding site" evidence="1">
    <location>
        <position position="109"/>
    </location>
    <ligand>
        <name>substrate</name>
    </ligand>
</feature>
<feature type="binding site" evidence="1">
    <location>
        <position position="138"/>
    </location>
    <ligand>
        <name>substrate</name>
    </ligand>
</feature>
<feature type="binding site" evidence="1">
    <location>
        <position position="228"/>
    </location>
    <ligand>
        <name>Mg(2+)</name>
        <dbReference type="ChEBI" id="CHEBI:18420"/>
    </ligand>
</feature>
<feature type="binding site" evidence="1">
    <location>
        <position position="228"/>
    </location>
    <ligand>
        <name>substrate</name>
    </ligand>
</feature>
<feature type="binding site" evidence="1">
    <location>
        <position position="252"/>
    </location>
    <ligand>
        <name>Mg(2+)</name>
        <dbReference type="ChEBI" id="CHEBI:18420"/>
    </ligand>
</feature>
<feature type="binding site" evidence="1">
    <location>
        <position position="256"/>
    </location>
    <ligand>
        <name>Mg(2+)</name>
        <dbReference type="ChEBI" id="CHEBI:18420"/>
    </ligand>
</feature>
<feature type="binding site" evidence="1">
    <location>
        <begin position="292"/>
        <end position="304"/>
    </location>
    <ligand>
        <name>NAD(+)</name>
        <dbReference type="ChEBI" id="CHEBI:57540"/>
    </ligand>
</feature>
<feature type="site" description="Important for catalysis" evidence="1">
    <location>
        <position position="145"/>
    </location>
</feature>
<feature type="site" description="Important for catalysis" evidence="1">
    <location>
        <position position="196"/>
    </location>
</feature>
<protein>
    <recommendedName>
        <fullName evidence="1">3-isopropylmalate dehydrogenase</fullName>
        <ecNumber evidence="1">1.1.1.85</ecNumber>
    </recommendedName>
    <alternativeName>
        <fullName evidence="1">3-IPM-DH</fullName>
    </alternativeName>
    <alternativeName>
        <fullName evidence="1">Beta-IPM dehydrogenase</fullName>
        <shortName evidence="1">IMDH</shortName>
    </alternativeName>
</protein>
<comment type="function">
    <text evidence="1">Catalyzes the oxidation of 3-carboxy-2-hydroxy-4-methylpentanoate (3-isopropylmalate) to 3-carboxy-4-methyl-2-oxopentanoate. The product decarboxylates to 4-methyl-2 oxopentanoate.</text>
</comment>
<comment type="catalytic activity">
    <reaction evidence="1">
        <text>(2R,3S)-3-isopropylmalate + NAD(+) = 4-methyl-2-oxopentanoate + CO2 + NADH</text>
        <dbReference type="Rhea" id="RHEA:32271"/>
        <dbReference type="ChEBI" id="CHEBI:16526"/>
        <dbReference type="ChEBI" id="CHEBI:17865"/>
        <dbReference type="ChEBI" id="CHEBI:35121"/>
        <dbReference type="ChEBI" id="CHEBI:57540"/>
        <dbReference type="ChEBI" id="CHEBI:57945"/>
        <dbReference type="EC" id="1.1.1.85"/>
    </reaction>
</comment>
<comment type="cofactor">
    <cofactor evidence="1">
        <name>Mg(2+)</name>
        <dbReference type="ChEBI" id="CHEBI:18420"/>
    </cofactor>
    <cofactor evidence="1">
        <name>Mn(2+)</name>
        <dbReference type="ChEBI" id="CHEBI:29035"/>
    </cofactor>
    <text evidence="1">Binds 1 Mg(2+) or Mn(2+) ion per subunit.</text>
</comment>
<comment type="pathway">
    <text evidence="1">Amino-acid biosynthesis; L-leucine biosynthesis; L-leucine from 3-methyl-2-oxobutanoate: step 3/4.</text>
</comment>
<comment type="subunit">
    <text evidence="1">Homodimer.</text>
</comment>
<comment type="subcellular location">
    <subcellularLocation>
        <location evidence="1">Cytoplasm</location>
    </subcellularLocation>
</comment>
<comment type="similarity">
    <text evidence="1">Belongs to the isocitrate and isopropylmalate dehydrogenases family. LeuB type 1 subfamily.</text>
</comment>
<keyword id="KW-0028">Amino-acid biosynthesis</keyword>
<keyword id="KW-0100">Branched-chain amino acid biosynthesis</keyword>
<keyword id="KW-0963">Cytoplasm</keyword>
<keyword id="KW-0432">Leucine biosynthesis</keyword>
<keyword id="KW-0460">Magnesium</keyword>
<keyword id="KW-0464">Manganese</keyword>
<keyword id="KW-0479">Metal-binding</keyword>
<keyword id="KW-0520">NAD</keyword>
<keyword id="KW-0560">Oxidoreductase</keyword>
<keyword id="KW-1185">Reference proteome</keyword>